<proteinExistence type="inferred from homology"/>
<keyword id="KW-0106">Calcium</keyword>
<keyword id="KW-0378">Hydrolase</keyword>
<keyword id="KW-0442">Lipid degradation</keyword>
<keyword id="KW-0443">Lipid metabolism</keyword>
<keyword id="KW-0479">Metal-binding</keyword>
<keyword id="KW-0964">Secreted</keyword>
<keyword id="KW-0732">Signal</keyword>
<keyword id="KW-0865">Zymogen</keyword>
<name>LIP2_STAAM</name>
<gene>
    <name type="primary">lip2</name>
    <name type="synonym">geh</name>
    <name type="ordered locus">SAV0320</name>
</gene>
<feature type="signal peptide" evidence="2">
    <location>
        <begin position="1"/>
        <end position="37"/>
    </location>
</feature>
<feature type="propeptide" id="PRO_0000045188" evidence="1">
    <location>
        <begin position="38"/>
        <end position="296"/>
    </location>
</feature>
<feature type="chain" id="PRO_0000045189" description="Lipase 2">
    <location>
        <begin position="297"/>
        <end position="691"/>
    </location>
</feature>
<feature type="region of interest" description="Disordered" evidence="4">
    <location>
        <begin position="34"/>
        <end position="267"/>
    </location>
</feature>
<feature type="compositionally biased region" description="Polar residues" evidence="4">
    <location>
        <begin position="34"/>
        <end position="72"/>
    </location>
</feature>
<feature type="compositionally biased region" description="Basic and acidic residues" evidence="4">
    <location>
        <begin position="73"/>
        <end position="82"/>
    </location>
</feature>
<feature type="compositionally biased region" description="Polar residues" evidence="4">
    <location>
        <begin position="83"/>
        <end position="115"/>
    </location>
</feature>
<feature type="compositionally biased region" description="Polar residues" evidence="4">
    <location>
        <begin position="125"/>
        <end position="172"/>
    </location>
</feature>
<feature type="compositionally biased region" description="Polar residues" evidence="4">
    <location>
        <begin position="186"/>
        <end position="207"/>
    </location>
</feature>
<feature type="compositionally biased region" description="Basic and acidic residues" evidence="4">
    <location>
        <begin position="226"/>
        <end position="238"/>
    </location>
</feature>
<feature type="compositionally biased region" description="Basic and acidic residues" evidence="4">
    <location>
        <begin position="258"/>
        <end position="267"/>
    </location>
</feature>
<feature type="active site" description="Nucleophile" evidence="1">
    <location>
        <position position="413"/>
    </location>
</feature>
<feature type="active site" description="Charge relay system" evidence="3">
    <location>
        <position position="604"/>
    </location>
</feature>
<feature type="active site" description="Charge relay system" evidence="3">
    <location>
        <position position="646"/>
    </location>
</feature>
<feature type="binding site" evidence="1">
    <location>
        <position position="580"/>
    </location>
    <ligand>
        <name>Ca(2+)</name>
        <dbReference type="ChEBI" id="CHEBI:29108"/>
    </ligand>
</feature>
<feature type="binding site" evidence="1">
    <location>
        <position position="645"/>
    </location>
    <ligand>
        <name>Ca(2+)</name>
        <dbReference type="ChEBI" id="CHEBI:29108"/>
    </ligand>
</feature>
<feature type="binding site" evidence="1">
    <location>
        <position position="648"/>
    </location>
    <ligand>
        <name>Ca(2+)</name>
        <dbReference type="ChEBI" id="CHEBI:29108"/>
    </ligand>
</feature>
<feature type="binding site" evidence="1">
    <location>
        <position position="653"/>
    </location>
    <ligand>
        <name>Ca(2+)</name>
        <dbReference type="ChEBI" id="CHEBI:29108"/>
    </ligand>
</feature>
<feature type="binding site" evidence="1">
    <location>
        <position position="656"/>
    </location>
    <ligand>
        <name>Ca(2+)</name>
        <dbReference type="ChEBI" id="CHEBI:29108"/>
    </ligand>
</feature>
<comment type="catalytic activity">
    <reaction>
        <text>a triacylglycerol + H2O = a diacylglycerol + a fatty acid + H(+)</text>
        <dbReference type="Rhea" id="RHEA:12044"/>
        <dbReference type="ChEBI" id="CHEBI:15377"/>
        <dbReference type="ChEBI" id="CHEBI:15378"/>
        <dbReference type="ChEBI" id="CHEBI:17855"/>
        <dbReference type="ChEBI" id="CHEBI:18035"/>
        <dbReference type="ChEBI" id="CHEBI:28868"/>
        <dbReference type="EC" id="3.1.1.3"/>
    </reaction>
</comment>
<comment type="subcellular location">
    <subcellularLocation>
        <location evidence="1">Secreted</location>
    </subcellularLocation>
</comment>
<comment type="similarity">
    <text evidence="5">Belongs to the AB hydrolase superfamily. Lipase family.</text>
</comment>
<reference key="1">
    <citation type="journal article" date="2001" name="Lancet">
        <title>Whole genome sequencing of meticillin-resistant Staphylococcus aureus.</title>
        <authorList>
            <person name="Kuroda M."/>
            <person name="Ohta T."/>
            <person name="Uchiyama I."/>
            <person name="Baba T."/>
            <person name="Yuzawa H."/>
            <person name="Kobayashi I."/>
            <person name="Cui L."/>
            <person name="Oguchi A."/>
            <person name="Aoki K."/>
            <person name="Nagai Y."/>
            <person name="Lian J.-Q."/>
            <person name="Ito T."/>
            <person name="Kanamori M."/>
            <person name="Matsumaru H."/>
            <person name="Maruyama A."/>
            <person name="Murakami H."/>
            <person name="Hosoyama A."/>
            <person name="Mizutani-Ui Y."/>
            <person name="Takahashi N.K."/>
            <person name="Sawano T."/>
            <person name="Inoue R."/>
            <person name="Kaito C."/>
            <person name="Sekimizu K."/>
            <person name="Hirakawa H."/>
            <person name="Kuhara S."/>
            <person name="Goto S."/>
            <person name="Yabuzaki J."/>
            <person name="Kanehisa M."/>
            <person name="Yamashita A."/>
            <person name="Oshima K."/>
            <person name="Furuya K."/>
            <person name="Yoshino C."/>
            <person name="Shiba T."/>
            <person name="Hattori M."/>
            <person name="Ogasawara N."/>
            <person name="Hayashi H."/>
            <person name="Hiramatsu K."/>
        </authorList>
    </citation>
    <scope>NUCLEOTIDE SEQUENCE [LARGE SCALE GENOMIC DNA]</scope>
    <source>
        <strain>Mu50 / ATCC 700699</strain>
    </source>
</reference>
<sequence>MLRGQEERKYSIRKYSIGVVSVLAATMFVVSSHEAQASEKTPTSNAAAQKETLNQPGEQGNAITSHQMQSGKQLDDMHKENGKSGTVTEGKDTLQSSKHQSTQNSKTIRTQNDNQVKQDSERQGSKQSHQNNATNNTERQNDQVQNTHHAERNGSQSTTSQSNDVDKSQPSIPAQKVLPNHDKAAPTSTTPPSNDKTAPKSTKAQDATTDKHPNQQDTHQPAHQIIDAKQDDTVRQSEQKPQVGDLSKHIDGQNSPEKPTDKNTDNKQLIKDALQAPKTRSTTNAAADAKKVRPLKANQVQPLNKYPVVFVHGFLGLVGDNAPALYPNYWGGNKFKVIEELRKQGYNVHQASVSAFGSNYDRAVELYYYIKGGRVDYGAAHAAKYGHERYGKTYKGIMPNWEPGKKVHLVGHSMGGQTIRLMEEFLRNGNKEEIAYHKAHGGEISPLFTGGHNNMVASITTLATPHNGSQAADKFGNTEAVRKIMFALNRFMGNKYSNIDLGLTQWGFKQLPNESYIDYIKRVSKSKIWTSDDNAAYDLTLDGSAKLNNMTSMNPNITYTTYTGVSSHTGPLGYENPDLGTFFLMDTTSRIIGHDAREEWRKNDGVVPVISSLHPSNQPFINVTNDEPATRRGIWQVKPIIQGWDHVDFIGVDFLDFKRKGAELANFYTGIINDLLRVEATESKGTQLKAS</sequence>
<dbReference type="EC" id="3.1.1.3"/>
<dbReference type="EMBL" id="BA000017">
    <property type="protein sequence ID" value="BAB56482.1"/>
    <property type="molecule type" value="Genomic_DNA"/>
</dbReference>
<dbReference type="RefSeq" id="WP_000943819.1">
    <property type="nucleotide sequence ID" value="NC_002758.2"/>
</dbReference>
<dbReference type="SMR" id="Q99WQ6"/>
<dbReference type="ESTHER" id="staau-lipas">
    <property type="family name" value="Bacterial_lip_FamI.6"/>
</dbReference>
<dbReference type="KEGG" id="sav:SAV0320"/>
<dbReference type="HOGENOM" id="CLU_023555_2_0_9"/>
<dbReference type="Proteomes" id="UP000002481">
    <property type="component" value="Chromosome"/>
</dbReference>
<dbReference type="GO" id="GO:0005576">
    <property type="term" value="C:extracellular region"/>
    <property type="evidence" value="ECO:0007669"/>
    <property type="project" value="UniProtKB-SubCell"/>
</dbReference>
<dbReference type="GO" id="GO:0046872">
    <property type="term" value="F:metal ion binding"/>
    <property type="evidence" value="ECO:0007669"/>
    <property type="project" value="UniProtKB-KW"/>
</dbReference>
<dbReference type="GO" id="GO:0004806">
    <property type="term" value="F:triacylglycerol lipase activity"/>
    <property type="evidence" value="ECO:0007669"/>
    <property type="project" value="UniProtKB-EC"/>
</dbReference>
<dbReference type="GO" id="GO:0016042">
    <property type="term" value="P:lipid catabolic process"/>
    <property type="evidence" value="ECO:0007669"/>
    <property type="project" value="UniProtKB-KW"/>
</dbReference>
<dbReference type="Gene3D" id="3.40.50.1820">
    <property type="entry name" value="alpha/beta hydrolase"/>
    <property type="match status" value="1"/>
</dbReference>
<dbReference type="InterPro" id="IPR029058">
    <property type="entry name" value="AB_hydrolase_fold"/>
</dbReference>
<dbReference type="InterPro" id="IPR056304">
    <property type="entry name" value="Lip-like_C"/>
</dbReference>
<dbReference type="InterPro" id="IPR005877">
    <property type="entry name" value="YSIRK_signal_dom"/>
</dbReference>
<dbReference type="NCBIfam" id="NF047351">
    <property type="entry name" value="lipase_YSIRK_Sa"/>
    <property type="match status" value="1"/>
</dbReference>
<dbReference type="NCBIfam" id="TIGR01168">
    <property type="entry name" value="YSIRK_signal"/>
    <property type="match status" value="1"/>
</dbReference>
<dbReference type="PANTHER" id="PTHR34043">
    <property type="entry name" value="ALPHA/BETA-HYDROLASES SUPERFAMILY PROTEIN"/>
    <property type="match status" value="1"/>
</dbReference>
<dbReference type="PANTHER" id="PTHR34043:SF3">
    <property type="entry name" value="ALPHA_BETA-HYDROLASES SUPERFAMILY PROTEIN"/>
    <property type="match status" value="1"/>
</dbReference>
<dbReference type="Pfam" id="PF24708">
    <property type="entry name" value="Lip_C"/>
    <property type="match status" value="1"/>
</dbReference>
<dbReference type="Pfam" id="PF04650">
    <property type="entry name" value="YSIRK_signal"/>
    <property type="match status" value="1"/>
</dbReference>
<dbReference type="SUPFAM" id="SSF53474">
    <property type="entry name" value="alpha/beta-Hydrolases"/>
    <property type="match status" value="1"/>
</dbReference>
<dbReference type="PROSITE" id="PS00120">
    <property type="entry name" value="LIPASE_SER"/>
    <property type="match status" value="1"/>
</dbReference>
<organism>
    <name type="scientific">Staphylococcus aureus (strain Mu50 / ATCC 700699)</name>
    <dbReference type="NCBI Taxonomy" id="158878"/>
    <lineage>
        <taxon>Bacteria</taxon>
        <taxon>Bacillati</taxon>
        <taxon>Bacillota</taxon>
        <taxon>Bacilli</taxon>
        <taxon>Bacillales</taxon>
        <taxon>Staphylococcaceae</taxon>
        <taxon>Staphylococcus</taxon>
    </lineage>
</organism>
<protein>
    <recommendedName>
        <fullName>Lipase 2</fullName>
        <ecNumber>3.1.1.3</ecNumber>
    </recommendedName>
    <alternativeName>
        <fullName>Glycerol ester hydrolase 2</fullName>
    </alternativeName>
</protein>
<accession>Q99WQ6</accession>
<evidence type="ECO:0000250" key="1"/>
<evidence type="ECO:0000255" key="2"/>
<evidence type="ECO:0000255" key="3">
    <source>
        <dbReference type="PROSITE-ProRule" id="PRU10037"/>
    </source>
</evidence>
<evidence type="ECO:0000256" key="4">
    <source>
        <dbReference type="SAM" id="MobiDB-lite"/>
    </source>
</evidence>
<evidence type="ECO:0000305" key="5"/>